<feature type="chain" id="PRO_0000188314" description="Glycerol-3-phosphate acyltransferase 1">
    <location>
        <begin position="1"/>
        <end position="189"/>
    </location>
</feature>
<feature type="transmembrane region" description="Helical" evidence="1">
    <location>
        <begin position="12"/>
        <end position="32"/>
    </location>
</feature>
<feature type="transmembrane region" description="Helical" evidence="1">
    <location>
        <begin position="61"/>
        <end position="81"/>
    </location>
</feature>
<feature type="transmembrane region" description="Helical" evidence="1">
    <location>
        <begin position="88"/>
        <end position="108"/>
    </location>
</feature>
<feature type="transmembrane region" description="Helical" evidence="1">
    <location>
        <begin position="124"/>
        <end position="144"/>
    </location>
</feature>
<feature type="transmembrane region" description="Helical" evidence="1">
    <location>
        <begin position="164"/>
        <end position="184"/>
    </location>
</feature>
<protein>
    <recommendedName>
        <fullName evidence="1">Glycerol-3-phosphate acyltransferase 1</fullName>
    </recommendedName>
    <alternativeName>
        <fullName evidence="1">Acyl-PO4 G3P acyltransferase 1</fullName>
    </alternativeName>
    <alternativeName>
        <fullName evidence="1">Acyl-phosphate--glycerol-3-phosphate acyltransferase 1</fullName>
    </alternativeName>
    <alternativeName>
        <fullName evidence="1">G3P acyltransferase 1</fullName>
        <shortName evidence="1">GPAT 1</shortName>
        <ecNumber evidence="1">2.3.1.275</ecNumber>
    </alternativeName>
    <alternativeName>
        <fullName evidence="1">Lysophosphatidic acid synthase 1</fullName>
        <shortName evidence="1">LPA synthase 1</shortName>
    </alternativeName>
</protein>
<comment type="function">
    <text evidence="1">Catalyzes the transfer of an acyl group from acyl-phosphate (acyl-PO(4)) to glycerol-3-phosphate (G3P) to form lysophosphatidic acid (LPA). This enzyme utilizes acyl-phosphate as fatty acyl donor, but not acyl-CoA or acyl-ACP.</text>
</comment>
<comment type="catalytic activity">
    <reaction evidence="1">
        <text>an acyl phosphate + sn-glycerol 3-phosphate = a 1-acyl-sn-glycero-3-phosphate + phosphate</text>
        <dbReference type="Rhea" id="RHEA:34075"/>
        <dbReference type="ChEBI" id="CHEBI:43474"/>
        <dbReference type="ChEBI" id="CHEBI:57597"/>
        <dbReference type="ChEBI" id="CHEBI:57970"/>
        <dbReference type="ChEBI" id="CHEBI:59918"/>
        <dbReference type="EC" id="2.3.1.275"/>
    </reaction>
</comment>
<comment type="pathway">
    <text evidence="1">Lipid metabolism; phospholipid metabolism.</text>
</comment>
<comment type="subunit">
    <text evidence="1">Probably interacts with PlsX.</text>
</comment>
<comment type="subcellular location">
    <subcellularLocation>
        <location evidence="1">Cell membrane</location>
        <topology evidence="1">Multi-pass membrane protein</topology>
    </subcellularLocation>
</comment>
<comment type="similarity">
    <text evidence="1">Belongs to the PlsY family.</text>
</comment>
<comment type="sequence caution" evidence="2">
    <conflict type="erroneous initiation">
        <sequence resource="EMBL-CDS" id="AAT54607"/>
    </conflict>
</comment>
<proteinExistence type="inferred from homology"/>
<organism>
    <name type="scientific">Bacillus anthracis</name>
    <dbReference type="NCBI Taxonomy" id="1392"/>
    <lineage>
        <taxon>Bacteria</taxon>
        <taxon>Bacillati</taxon>
        <taxon>Bacillota</taxon>
        <taxon>Bacilli</taxon>
        <taxon>Bacillales</taxon>
        <taxon>Bacillaceae</taxon>
        <taxon>Bacillus</taxon>
        <taxon>Bacillus cereus group</taxon>
    </lineage>
</organism>
<sequence length="189" mass="21046">MQKVNDYMINSMQFLYLVASYLFGNILTAYIVTKWRHNVDIRDEGSGNPGARNMGRVYGKGYFVATFLGDAIKGAIVVSIAKYLFEDFTFVMLTLLAVIMGHIYPMLFKGKGGKGISTFIGGLIAFDYLIALTLVAVFIIFYLIFKGFTKPGLITIACLPLCMILYSYSIVTTILSALIIVLILYVNHE</sequence>
<dbReference type="EC" id="2.3.1.275" evidence="1"/>
<dbReference type="EMBL" id="AE016879">
    <property type="protein sequence ID" value="AAP26329.1"/>
    <property type="molecule type" value="Genomic_DNA"/>
</dbReference>
<dbReference type="EMBL" id="AE017334">
    <property type="protein sequence ID" value="AAT31581.2"/>
    <property type="molecule type" value="Genomic_DNA"/>
</dbReference>
<dbReference type="EMBL" id="AE017225">
    <property type="protein sequence ID" value="AAT54607.1"/>
    <property type="status" value="ALT_INIT"/>
    <property type="molecule type" value="Genomic_DNA"/>
</dbReference>
<dbReference type="RefSeq" id="NP_844843.1">
    <property type="nucleotide sequence ID" value="NC_003997.3"/>
</dbReference>
<dbReference type="SMR" id="Q81QF8"/>
<dbReference type="STRING" id="261594.GBAA_2467"/>
<dbReference type="DNASU" id="1086564"/>
<dbReference type="KEGG" id="ban:BA_2467"/>
<dbReference type="KEGG" id="bar:GBAA_2467"/>
<dbReference type="KEGG" id="bat:BAS2295"/>
<dbReference type="PATRIC" id="fig|198094.11.peg.2437"/>
<dbReference type="eggNOG" id="COG0344">
    <property type="taxonomic scope" value="Bacteria"/>
</dbReference>
<dbReference type="HOGENOM" id="CLU_081254_7_0_9"/>
<dbReference type="OMA" id="SFILVAW"/>
<dbReference type="BRENDA" id="2.3.1.275">
    <property type="organism ID" value="634"/>
</dbReference>
<dbReference type="UniPathway" id="UPA00085"/>
<dbReference type="Proteomes" id="UP000000427">
    <property type="component" value="Chromosome"/>
</dbReference>
<dbReference type="Proteomes" id="UP000000594">
    <property type="component" value="Chromosome"/>
</dbReference>
<dbReference type="GO" id="GO:0005886">
    <property type="term" value="C:plasma membrane"/>
    <property type="evidence" value="ECO:0007669"/>
    <property type="project" value="UniProtKB-SubCell"/>
</dbReference>
<dbReference type="GO" id="GO:0043772">
    <property type="term" value="F:acyl-phosphate glycerol-3-phosphate acyltransferase activity"/>
    <property type="evidence" value="ECO:0007669"/>
    <property type="project" value="UniProtKB-UniRule"/>
</dbReference>
<dbReference type="GO" id="GO:0008654">
    <property type="term" value="P:phospholipid biosynthetic process"/>
    <property type="evidence" value="ECO:0007669"/>
    <property type="project" value="UniProtKB-UniRule"/>
</dbReference>
<dbReference type="HAMAP" id="MF_01043">
    <property type="entry name" value="PlsY"/>
    <property type="match status" value="1"/>
</dbReference>
<dbReference type="InterPro" id="IPR003811">
    <property type="entry name" value="G3P_acylTferase_PlsY"/>
</dbReference>
<dbReference type="NCBIfam" id="NF001254">
    <property type="entry name" value="PRK00220.2-1"/>
    <property type="match status" value="1"/>
</dbReference>
<dbReference type="PANTHER" id="PTHR30309:SF0">
    <property type="entry name" value="GLYCEROL-3-PHOSPHATE ACYLTRANSFERASE-RELATED"/>
    <property type="match status" value="1"/>
</dbReference>
<dbReference type="PANTHER" id="PTHR30309">
    <property type="entry name" value="INNER MEMBRANE PROTEIN YGIH"/>
    <property type="match status" value="1"/>
</dbReference>
<dbReference type="Pfam" id="PF02660">
    <property type="entry name" value="G3P_acyltransf"/>
    <property type="match status" value="1"/>
</dbReference>
<dbReference type="SMART" id="SM01207">
    <property type="entry name" value="G3P_acyltransf"/>
    <property type="match status" value="1"/>
</dbReference>
<reference key="1">
    <citation type="journal article" date="2003" name="Nature">
        <title>The genome sequence of Bacillus anthracis Ames and comparison to closely related bacteria.</title>
        <authorList>
            <person name="Read T.D."/>
            <person name="Peterson S.N."/>
            <person name="Tourasse N.J."/>
            <person name="Baillie L.W."/>
            <person name="Paulsen I.T."/>
            <person name="Nelson K.E."/>
            <person name="Tettelin H."/>
            <person name="Fouts D.E."/>
            <person name="Eisen J.A."/>
            <person name="Gill S.R."/>
            <person name="Holtzapple E.K."/>
            <person name="Okstad O.A."/>
            <person name="Helgason E."/>
            <person name="Rilstone J."/>
            <person name="Wu M."/>
            <person name="Kolonay J.F."/>
            <person name="Beanan M.J."/>
            <person name="Dodson R.J."/>
            <person name="Brinkac L.M."/>
            <person name="Gwinn M.L."/>
            <person name="DeBoy R.T."/>
            <person name="Madpu R."/>
            <person name="Daugherty S.C."/>
            <person name="Durkin A.S."/>
            <person name="Haft D.H."/>
            <person name="Nelson W.C."/>
            <person name="Peterson J.D."/>
            <person name="Pop M."/>
            <person name="Khouri H.M."/>
            <person name="Radune D."/>
            <person name="Benton J.L."/>
            <person name="Mahamoud Y."/>
            <person name="Jiang L."/>
            <person name="Hance I.R."/>
            <person name="Weidman J.F."/>
            <person name="Berry K.J."/>
            <person name="Plaut R.D."/>
            <person name="Wolf A.M."/>
            <person name="Watkins K.L."/>
            <person name="Nierman W.C."/>
            <person name="Hazen A."/>
            <person name="Cline R.T."/>
            <person name="Redmond C."/>
            <person name="Thwaite J.E."/>
            <person name="White O."/>
            <person name="Salzberg S.L."/>
            <person name="Thomason B."/>
            <person name="Friedlander A.M."/>
            <person name="Koehler T.M."/>
            <person name="Hanna P.C."/>
            <person name="Kolstoe A.-B."/>
            <person name="Fraser C.M."/>
        </authorList>
    </citation>
    <scope>NUCLEOTIDE SEQUENCE [LARGE SCALE GENOMIC DNA]</scope>
    <source>
        <strain>Ames / isolate Porton</strain>
    </source>
</reference>
<reference key="2">
    <citation type="journal article" date="2009" name="J. Bacteriol.">
        <title>The complete genome sequence of Bacillus anthracis Ames 'Ancestor'.</title>
        <authorList>
            <person name="Ravel J."/>
            <person name="Jiang L."/>
            <person name="Stanley S.T."/>
            <person name="Wilson M.R."/>
            <person name="Decker R.S."/>
            <person name="Read T.D."/>
            <person name="Worsham P."/>
            <person name="Keim P.S."/>
            <person name="Salzberg S.L."/>
            <person name="Fraser-Liggett C.M."/>
            <person name="Rasko D.A."/>
        </authorList>
    </citation>
    <scope>NUCLEOTIDE SEQUENCE [LARGE SCALE GENOMIC DNA]</scope>
    <source>
        <strain>Ames ancestor</strain>
    </source>
</reference>
<reference key="3">
    <citation type="submission" date="2004-01" db="EMBL/GenBank/DDBJ databases">
        <title>Complete genome sequence of Bacillus anthracis Sterne.</title>
        <authorList>
            <person name="Brettin T.S."/>
            <person name="Bruce D."/>
            <person name="Challacombe J.F."/>
            <person name="Gilna P."/>
            <person name="Han C."/>
            <person name="Hill K."/>
            <person name="Hitchcock P."/>
            <person name="Jackson P."/>
            <person name="Keim P."/>
            <person name="Longmire J."/>
            <person name="Lucas S."/>
            <person name="Okinaka R."/>
            <person name="Richardson P."/>
            <person name="Rubin E."/>
            <person name="Tice H."/>
        </authorList>
    </citation>
    <scope>NUCLEOTIDE SEQUENCE [LARGE SCALE GENOMIC DNA]</scope>
    <source>
        <strain>Sterne</strain>
    </source>
</reference>
<evidence type="ECO:0000255" key="1">
    <source>
        <dbReference type="HAMAP-Rule" id="MF_01043"/>
    </source>
</evidence>
<evidence type="ECO:0000305" key="2"/>
<accession>Q81QF8</accession>
<accession>Q6HYN2</accession>
<accession>Q6KSN4</accession>
<keyword id="KW-1003">Cell membrane</keyword>
<keyword id="KW-0444">Lipid biosynthesis</keyword>
<keyword id="KW-0443">Lipid metabolism</keyword>
<keyword id="KW-0472">Membrane</keyword>
<keyword id="KW-0594">Phospholipid biosynthesis</keyword>
<keyword id="KW-1208">Phospholipid metabolism</keyword>
<keyword id="KW-1185">Reference proteome</keyword>
<keyword id="KW-0808">Transferase</keyword>
<keyword id="KW-0812">Transmembrane</keyword>
<keyword id="KW-1133">Transmembrane helix</keyword>
<gene>
    <name evidence="1" type="primary">plsY1</name>
    <name type="ordered locus">BA_2467</name>
    <name type="ordered locus">GBAA_2467</name>
    <name type="ordered locus">BAS2295</name>
</gene>
<name>PLSY1_BACAN</name>